<reference key="1">
    <citation type="journal article" date="2008" name="PLoS ONE">
        <title>Comparative analysis of Acinetobacters: three genomes for three lifestyles.</title>
        <authorList>
            <person name="Vallenet D."/>
            <person name="Nordmann P."/>
            <person name="Barbe V."/>
            <person name="Poirel L."/>
            <person name="Mangenot S."/>
            <person name="Bataille E."/>
            <person name="Dossat C."/>
            <person name="Gas S."/>
            <person name="Kreimeyer A."/>
            <person name="Lenoble P."/>
            <person name="Oztas S."/>
            <person name="Poulain J."/>
            <person name="Segurens B."/>
            <person name="Robert C."/>
            <person name="Abergel C."/>
            <person name="Claverie J.-M."/>
            <person name="Raoult D."/>
            <person name="Medigue C."/>
            <person name="Weissenbach J."/>
            <person name="Cruveiller S."/>
        </authorList>
    </citation>
    <scope>NUCLEOTIDE SEQUENCE [LARGE SCALE GENOMIC DNA]</scope>
    <source>
        <strain>SDF</strain>
    </source>
</reference>
<feature type="chain" id="PRO_1000120902" description="Large ribosomal subunit protein uL10">
    <location>
        <begin position="1"/>
        <end position="168"/>
    </location>
</feature>
<protein>
    <recommendedName>
        <fullName evidence="1">Large ribosomal subunit protein uL10</fullName>
    </recommendedName>
    <alternativeName>
        <fullName evidence="2">50S ribosomal protein L10</fullName>
    </alternativeName>
</protein>
<proteinExistence type="inferred from homology"/>
<accession>B0VLZ8</accession>
<keyword id="KW-0687">Ribonucleoprotein</keyword>
<keyword id="KW-0689">Ribosomal protein</keyword>
<keyword id="KW-0694">RNA-binding</keyword>
<keyword id="KW-0699">rRNA-binding</keyword>
<organism>
    <name type="scientific">Acinetobacter baumannii (strain SDF)</name>
    <dbReference type="NCBI Taxonomy" id="509170"/>
    <lineage>
        <taxon>Bacteria</taxon>
        <taxon>Pseudomonadati</taxon>
        <taxon>Pseudomonadota</taxon>
        <taxon>Gammaproteobacteria</taxon>
        <taxon>Moraxellales</taxon>
        <taxon>Moraxellaceae</taxon>
        <taxon>Acinetobacter</taxon>
        <taxon>Acinetobacter calcoaceticus/baumannii complex</taxon>
    </lineage>
</organism>
<comment type="function">
    <text evidence="1">Forms part of the ribosomal stalk, playing a central role in the interaction of the ribosome with GTP-bound translation factors.</text>
</comment>
<comment type="subunit">
    <text evidence="1">Part of the ribosomal stalk of the 50S ribosomal subunit. The N-terminus interacts with L11 and the large rRNA to form the base of the stalk. The C-terminus forms an elongated spine to which L12 dimers bind in a sequential fashion forming a multimeric L10(L12)X complex.</text>
</comment>
<comment type="similarity">
    <text evidence="1">Belongs to the universal ribosomal protein uL10 family.</text>
</comment>
<evidence type="ECO:0000255" key="1">
    <source>
        <dbReference type="HAMAP-Rule" id="MF_00362"/>
    </source>
</evidence>
<evidence type="ECO:0000305" key="2"/>
<sequence length="168" mass="18090">MALLIEDKKQIVAEVSEVASKAFAAVVADYQGLSVEQLTTLRVEARKLGVTTRIVRNTLAKRAFQGTQFDILNDNLVGPTILGFSTSEDDMGAAARLFEEFAKTNKAFELKAAAFDGKVYQGADVSVIANLPNQEKALTMLASVLQAPISKLGRLITALKEKNESEAA</sequence>
<dbReference type="EMBL" id="CU468230">
    <property type="protein sequence ID" value="CAP02515.1"/>
    <property type="molecule type" value="Genomic_DNA"/>
</dbReference>
<dbReference type="SMR" id="B0VLZ8"/>
<dbReference type="KEGG" id="abm:ABSDF3245"/>
<dbReference type="HOGENOM" id="CLU_092227_0_2_6"/>
<dbReference type="Proteomes" id="UP000001741">
    <property type="component" value="Chromosome"/>
</dbReference>
<dbReference type="GO" id="GO:0015934">
    <property type="term" value="C:large ribosomal subunit"/>
    <property type="evidence" value="ECO:0007669"/>
    <property type="project" value="InterPro"/>
</dbReference>
<dbReference type="GO" id="GO:0070180">
    <property type="term" value="F:large ribosomal subunit rRNA binding"/>
    <property type="evidence" value="ECO:0007669"/>
    <property type="project" value="UniProtKB-UniRule"/>
</dbReference>
<dbReference type="GO" id="GO:0003735">
    <property type="term" value="F:structural constituent of ribosome"/>
    <property type="evidence" value="ECO:0007669"/>
    <property type="project" value="InterPro"/>
</dbReference>
<dbReference type="GO" id="GO:0006412">
    <property type="term" value="P:translation"/>
    <property type="evidence" value="ECO:0007669"/>
    <property type="project" value="UniProtKB-UniRule"/>
</dbReference>
<dbReference type="CDD" id="cd05797">
    <property type="entry name" value="Ribosomal_L10"/>
    <property type="match status" value="1"/>
</dbReference>
<dbReference type="Gene3D" id="3.30.70.1730">
    <property type="match status" value="1"/>
</dbReference>
<dbReference type="HAMAP" id="MF_00362">
    <property type="entry name" value="Ribosomal_uL10"/>
    <property type="match status" value="1"/>
</dbReference>
<dbReference type="InterPro" id="IPR001790">
    <property type="entry name" value="Ribosomal_uL10"/>
</dbReference>
<dbReference type="InterPro" id="IPR043141">
    <property type="entry name" value="Ribosomal_uL10-like_sf"/>
</dbReference>
<dbReference type="InterPro" id="IPR022973">
    <property type="entry name" value="Ribosomal_uL10_bac"/>
</dbReference>
<dbReference type="InterPro" id="IPR047865">
    <property type="entry name" value="Ribosomal_uL10_bac_type"/>
</dbReference>
<dbReference type="InterPro" id="IPR002363">
    <property type="entry name" value="Ribosomal_uL10_CS_bac"/>
</dbReference>
<dbReference type="NCBIfam" id="NF000955">
    <property type="entry name" value="PRK00099.1-1"/>
    <property type="match status" value="1"/>
</dbReference>
<dbReference type="PANTHER" id="PTHR11560">
    <property type="entry name" value="39S RIBOSOMAL PROTEIN L10, MITOCHONDRIAL"/>
    <property type="match status" value="1"/>
</dbReference>
<dbReference type="Pfam" id="PF00466">
    <property type="entry name" value="Ribosomal_L10"/>
    <property type="match status" value="1"/>
</dbReference>
<dbReference type="SUPFAM" id="SSF160369">
    <property type="entry name" value="Ribosomal protein L10-like"/>
    <property type="match status" value="1"/>
</dbReference>
<dbReference type="PROSITE" id="PS01109">
    <property type="entry name" value="RIBOSOMAL_L10"/>
    <property type="match status" value="1"/>
</dbReference>
<gene>
    <name evidence="1" type="primary">rplJ</name>
    <name type="ordered locus">ABSDF3245</name>
</gene>
<name>RL10_ACIBS</name>